<name>VL2_HPV53</name>
<accession>P36764</accession>
<keyword id="KW-0167">Capsid protein</keyword>
<keyword id="KW-1176">Cytoplasmic inwards viral transport</keyword>
<keyword id="KW-1015">Disulfide bond</keyword>
<keyword id="KW-0238">DNA-binding</keyword>
<keyword id="KW-1039">Host endosome</keyword>
<keyword id="KW-1040">Host Golgi apparatus</keyword>
<keyword id="KW-1048">Host nucleus</keyword>
<keyword id="KW-0945">Host-virus interaction</keyword>
<keyword id="KW-0426">Late protein</keyword>
<keyword id="KW-1177">Microtubular inwards viral transport</keyword>
<keyword id="KW-0597">Phosphoprotein</keyword>
<keyword id="KW-1163">Viral penetration into host nucleus</keyword>
<keyword id="KW-0946">Virion</keyword>
<keyword id="KW-1160">Virus entry into host cell</keyword>
<proteinExistence type="inferred from homology"/>
<protein>
    <recommendedName>
        <fullName evidence="1">Minor capsid protein L2</fullName>
    </recommendedName>
</protein>
<sequence>MVAHRARRRKRASATQLYQTCKQSGTCPEDVINKIEHKTWADKILQWGSLFTFFGGLGIGTGSGTGGRTGYIPLGTRPSTVVDVTPARPPIVVESVGPTDPSIVTLVEESSVIESGASFPNFTGTAGFEVTSSSTTTPAVLDITPTSTSVHVSSTTYTNPTFVDPPVIEVPQTGEVSGNILISTPTSGVHSYEEIPMQTFAVQGTGNEPISSTPIPGLRRIAAPRLYKKAFQQVKVTDPAFLHKPETLINVDNPIFQNADTTLTFSPSGVAPDPDFLDIVALHRPAFTTRRGGVRFSRLGTKATMRTRSGKQIGARVHYYYDVSPITQTEEIEMQPLLSTDNTFDGLYDIYANIDDEAPVSSRFSIATPSRLPTNTVPLSFSGSTSNVTIPFGTSWDVPIYSGPDVVLPTGPPTWPYAPQSPFDTTHDVVIQGSTFALWPVYFLKRRRRKRIPYFLADGGVAA</sequence>
<organismHost>
    <name type="scientific">Homo sapiens</name>
    <name type="common">Human</name>
    <dbReference type="NCBI Taxonomy" id="9606"/>
</organismHost>
<comment type="function">
    <text evidence="1">Minor protein of the capsid that localizes along the inner surface of the virion, within the central cavities beneath the L1 pentamers. Plays a role in capsid stabilization through interaction with the major capsid protein L1. Once the virion enters the host cell, L2 escorts the genomic DNA into the nucleus by promoting escape from the endosomal compartments and traffic through the host Golgi network. Mechanistically, the C-terminus of L2 possesses a cell-penetrating peptide that protudes from the host endosome, interacts with host cytoplasmic retromer cargo and thereby mediates the capsid delivery to the host trans-Golgi network. Plays a role through its interaction with host dynein in the intracellular microtubule-dependent transport of viral capsid toward the nucleus. Mediates the viral genome import into the nucleus through binding to host importins. Once within the nucleus, L2 localizes viral genomes to host PML bodies in order to activate early gene expression for establishment of infection. Later on, promotes late gene expression by interacting with the viral E2 protein and by inhibiting its transcriptional activation functions. During virion assembly, encapsidates the genome by direct interaction with the viral DNA.</text>
</comment>
<comment type="subunit">
    <text evidence="1">Interacts with major capsid protein L1. Interacts with E2; this interaction inhibits E2 transcriptional activity but not the DNA replication function E2. Interacts with host GADD45GIP1. Interacts with host HSPA8; this interaction is required for L2 nuclear translocation. Interacts with host importins KPNB2 and KPNB3. Forms a complex with importin alpha2-beta1 heterodimers via interaction with the importin alpha2 adapter. Interacts with host DYNLT1; this interaction is essential for virus intracellular transport during entry. Interacts (via C-terminus) with host retromer subunits VPS35 and VPS29.</text>
</comment>
<comment type="subcellular location">
    <subcellularLocation>
        <location evidence="1">Virion</location>
    </subcellularLocation>
    <subcellularLocation>
        <location evidence="1">Host nucleus</location>
    </subcellularLocation>
    <subcellularLocation>
        <location evidence="1">Host early endosome</location>
    </subcellularLocation>
    <subcellularLocation>
        <location evidence="1">Host Golgi apparatus</location>
    </subcellularLocation>
</comment>
<comment type="PTM">
    <text evidence="1">Highly phosphorylated.</text>
</comment>
<comment type="similarity">
    <text evidence="1">Belongs to the papillomaviridae L2 protein family.</text>
</comment>
<dbReference type="EMBL" id="X74482">
    <property type="protein sequence ID" value="CAA52594.1"/>
    <property type="molecule type" value="Genomic_DNA"/>
</dbReference>
<dbReference type="PIR" id="S36530">
    <property type="entry name" value="S36530"/>
</dbReference>
<dbReference type="RefSeq" id="NP_041847.1">
    <property type="nucleotide sequence ID" value="NC_001593.1"/>
</dbReference>
<dbReference type="GeneID" id="1489467"/>
<dbReference type="KEGG" id="vg:1489467"/>
<dbReference type="OrthoDB" id="8047at10239"/>
<dbReference type="Proteomes" id="UP000009126">
    <property type="component" value="Genome"/>
</dbReference>
<dbReference type="GO" id="GO:0043657">
    <property type="term" value="C:host cell"/>
    <property type="evidence" value="ECO:0007669"/>
    <property type="project" value="GOC"/>
</dbReference>
<dbReference type="GO" id="GO:0044174">
    <property type="term" value="C:host cell endosome"/>
    <property type="evidence" value="ECO:0007669"/>
    <property type="project" value="UniProtKB-KW"/>
</dbReference>
<dbReference type="GO" id="GO:0044177">
    <property type="term" value="C:host cell Golgi apparatus"/>
    <property type="evidence" value="ECO:0007669"/>
    <property type="project" value="UniProtKB-SubCell"/>
</dbReference>
<dbReference type="GO" id="GO:0042025">
    <property type="term" value="C:host cell nucleus"/>
    <property type="evidence" value="ECO:0007669"/>
    <property type="project" value="UniProtKB-SubCell"/>
</dbReference>
<dbReference type="GO" id="GO:0019028">
    <property type="term" value="C:viral capsid"/>
    <property type="evidence" value="ECO:0007669"/>
    <property type="project" value="UniProtKB-UniRule"/>
</dbReference>
<dbReference type="GO" id="GO:0003677">
    <property type="term" value="F:DNA binding"/>
    <property type="evidence" value="ECO:0007669"/>
    <property type="project" value="UniProtKB-UniRule"/>
</dbReference>
<dbReference type="GO" id="GO:0005198">
    <property type="term" value="F:structural molecule activity"/>
    <property type="evidence" value="ECO:0007669"/>
    <property type="project" value="UniProtKB-UniRule"/>
</dbReference>
<dbReference type="GO" id="GO:0075521">
    <property type="term" value="P:microtubule-dependent intracellular transport of viral material towards nucleus"/>
    <property type="evidence" value="ECO:0007669"/>
    <property type="project" value="UniProtKB-UniRule"/>
</dbReference>
<dbReference type="GO" id="GO:0046718">
    <property type="term" value="P:symbiont entry into host cell"/>
    <property type="evidence" value="ECO:0007669"/>
    <property type="project" value="UniProtKB-KW"/>
</dbReference>
<dbReference type="GO" id="GO:0075732">
    <property type="term" value="P:viral penetration into host nucleus"/>
    <property type="evidence" value="ECO:0007669"/>
    <property type="project" value="UniProtKB-KW"/>
</dbReference>
<dbReference type="HAMAP" id="MF_04003">
    <property type="entry name" value="PPV_L2"/>
    <property type="match status" value="1"/>
</dbReference>
<dbReference type="InterPro" id="IPR000784">
    <property type="entry name" value="Late_L2"/>
</dbReference>
<dbReference type="Pfam" id="PF00513">
    <property type="entry name" value="Late_protein_L2"/>
    <property type="match status" value="1"/>
</dbReference>
<organism>
    <name type="scientific">Human papillomavirus type 53</name>
    <dbReference type="NCBI Taxonomy" id="333765"/>
    <lineage>
        <taxon>Viruses</taxon>
        <taxon>Monodnaviria</taxon>
        <taxon>Shotokuvirae</taxon>
        <taxon>Cossaviricota</taxon>
        <taxon>Papovaviricetes</taxon>
        <taxon>Zurhausenvirales</taxon>
        <taxon>Papillomaviridae</taxon>
        <taxon>Firstpapillomavirinae</taxon>
        <taxon>Alphapapillomavirus</taxon>
        <taxon>Alphapapillomavirus 6</taxon>
    </lineage>
</organism>
<feature type="chain" id="PRO_0000133619" description="Minor capsid protein L2">
    <location>
        <begin position="1"/>
        <end position="463"/>
    </location>
</feature>
<feature type="short sequence motif" description="Nuclear localization signal" evidence="1">
    <location>
        <begin position="1"/>
        <end position="12"/>
    </location>
</feature>
<feature type="short sequence motif" description="Nuclear localization signal" evidence="1">
    <location>
        <begin position="444"/>
        <end position="452"/>
    </location>
</feature>
<feature type="disulfide bond" evidence="1">
    <location>
        <begin position="21"/>
        <end position="27"/>
    </location>
</feature>
<evidence type="ECO:0000255" key="1">
    <source>
        <dbReference type="HAMAP-Rule" id="MF_04003"/>
    </source>
</evidence>
<reference key="1">
    <citation type="journal article" date="1994" name="Curr. Top. Microbiol. Immunol.">
        <title>Primer-directed sequencing of human papillomavirus types.</title>
        <authorList>
            <person name="Delius H."/>
            <person name="Hofmann B."/>
        </authorList>
    </citation>
    <scope>NUCLEOTIDE SEQUENCE [GENOMIC DNA]</scope>
</reference>
<gene>
    <name evidence="1" type="primary">L2</name>
</gene>